<comment type="function">
    <text evidence="1">Endonuclease IV plays a role in DNA repair. It cleaves phosphodiester bonds at apurinic or apyrimidinic (AP) sites, generating a 3'-hydroxyl group and a 5'-terminal sugar phosphate.</text>
</comment>
<comment type="catalytic activity">
    <reaction evidence="1">
        <text>Endonucleolytic cleavage to 5'-phosphooligonucleotide end-products.</text>
        <dbReference type="EC" id="3.1.21.2"/>
    </reaction>
</comment>
<comment type="cofactor">
    <cofactor evidence="1">
        <name>Zn(2+)</name>
        <dbReference type="ChEBI" id="CHEBI:29105"/>
    </cofactor>
    <text evidence="1">Binds 3 Zn(2+) ions.</text>
</comment>
<comment type="similarity">
    <text evidence="1">Belongs to the AP endonuclease 2 family.</text>
</comment>
<proteinExistence type="inferred from homology"/>
<reference key="1">
    <citation type="submission" date="2008-06" db="EMBL/GenBank/DDBJ databases">
        <title>Genome and proteome analysis of A. pleuropneumoniae serotype 7.</title>
        <authorList>
            <person name="Linke B."/>
            <person name="Buettner F."/>
            <person name="Martinez-Arias R."/>
            <person name="Goesmann A."/>
            <person name="Baltes N."/>
            <person name="Tegetmeyer H."/>
            <person name="Singh M."/>
            <person name="Gerlach G.F."/>
        </authorList>
    </citation>
    <scope>NUCLEOTIDE SEQUENCE [LARGE SCALE GENOMIC DNA]</scope>
    <source>
        <strain>AP76</strain>
    </source>
</reference>
<evidence type="ECO:0000255" key="1">
    <source>
        <dbReference type="HAMAP-Rule" id="MF_00152"/>
    </source>
</evidence>
<keyword id="KW-0227">DNA damage</keyword>
<keyword id="KW-0234">DNA repair</keyword>
<keyword id="KW-0255">Endonuclease</keyword>
<keyword id="KW-0378">Hydrolase</keyword>
<keyword id="KW-0479">Metal-binding</keyword>
<keyword id="KW-0540">Nuclease</keyword>
<keyword id="KW-0862">Zinc</keyword>
<accession>B3H0M0</accession>
<gene>
    <name evidence="1" type="primary">nfo</name>
    <name type="ordered locus">APP7_0380</name>
</gene>
<protein>
    <recommendedName>
        <fullName evidence="1">Probable endonuclease 4</fullName>
        <ecNumber evidence="1">3.1.21.2</ecNumber>
    </recommendedName>
    <alternativeName>
        <fullName evidence="1">Endodeoxyribonuclease IV</fullName>
    </alternativeName>
    <alternativeName>
        <fullName evidence="1">Endonuclease IV</fullName>
    </alternativeName>
</protein>
<dbReference type="EC" id="3.1.21.2" evidence="1"/>
<dbReference type="EMBL" id="CP001091">
    <property type="protein sequence ID" value="ACE61032.1"/>
    <property type="molecule type" value="Genomic_DNA"/>
</dbReference>
<dbReference type="RefSeq" id="WP_005600458.1">
    <property type="nucleotide sequence ID" value="NC_010939.1"/>
</dbReference>
<dbReference type="SMR" id="B3H0M0"/>
<dbReference type="KEGG" id="apa:APP7_0380"/>
<dbReference type="HOGENOM" id="CLU_025885_0_4_6"/>
<dbReference type="Proteomes" id="UP000001226">
    <property type="component" value="Chromosome"/>
</dbReference>
<dbReference type="GO" id="GO:0008833">
    <property type="term" value="F:deoxyribonuclease IV (phage-T4-induced) activity"/>
    <property type="evidence" value="ECO:0007669"/>
    <property type="project" value="UniProtKB-UniRule"/>
</dbReference>
<dbReference type="GO" id="GO:0003677">
    <property type="term" value="F:DNA binding"/>
    <property type="evidence" value="ECO:0007669"/>
    <property type="project" value="InterPro"/>
</dbReference>
<dbReference type="GO" id="GO:0003906">
    <property type="term" value="F:DNA-(apurinic or apyrimidinic site) endonuclease activity"/>
    <property type="evidence" value="ECO:0007669"/>
    <property type="project" value="TreeGrafter"/>
</dbReference>
<dbReference type="GO" id="GO:0008081">
    <property type="term" value="F:phosphoric diester hydrolase activity"/>
    <property type="evidence" value="ECO:0007669"/>
    <property type="project" value="TreeGrafter"/>
</dbReference>
<dbReference type="GO" id="GO:0008270">
    <property type="term" value="F:zinc ion binding"/>
    <property type="evidence" value="ECO:0007669"/>
    <property type="project" value="UniProtKB-UniRule"/>
</dbReference>
<dbReference type="GO" id="GO:0006284">
    <property type="term" value="P:base-excision repair"/>
    <property type="evidence" value="ECO:0007669"/>
    <property type="project" value="TreeGrafter"/>
</dbReference>
<dbReference type="CDD" id="cd00019">
    <property type="entry name" value="AP2Ec"/>
    <property type="match status" value="1"/>
</dbReference>
<dbReference type="FunFam" id="3.20.20.150:FF:000001">
    <property type="entry name" value="Probable endonuclease 4"/>
    <property type="match status" value="1"/>
</dbReference>
<dbReference type="Gene3D" id="3.20.20.150">
    <property type="entry name" value="Divalent-metal-dependent TIM barrel enzymes"/>
    <property type="match status" value="1"/>
</dbReference>
<dbReference type="HAMAP" id="MF_00152">
    <property type="entry name" value="Nfo"/>
    <property type="match status" value="1"/>
</dbReference>
<dbReference type="InterPro" id="IPR001719">
    <property type="entry name" value="AP_endonuc_2"/>
</dbReference>
<dbReference type="InterPro" id="IPR018246">
    <property type="entry name" value="AP_endonuc_F2_Zn_BS"/>
</dbReference>
<dbReference type="InterPro" id="IPR036237">
    <property type="entry name" value="Xyl_isomerase-like_sf"/>
</dbReference>
<dbReference type="InterPro" id="IPR013022">
    <property type="entry name" value="Xyl_isomerase-like_TIM-brl"/>
</dbReference>
<dbReference type="NCBIfam" id="TIGR00587">
    <property type="entry name" value="nfo"/>
    <property type="match status" value="1"/>
</dbReference>
<dbReference type="NCBIfam" id="NF002199">
    <property type="entry name" value="PRK01060.1-4"/>
    <property type="match status" value="1"/>
</dbReference>
<dbReference type="PANTHER" id="PTHR21445:SF0">
    <property type="entry name" value="APURINIC-APYRIMIDINIC ENDONUCLEASE"/>
    <property type="match status" value="1"/>
</dbReference>
<dbReference type="PANTHER" id="PTHR21445">
    <property type="entry name" value="ENDONUCLEASE IV ENDODEOXYRIBONUCLEASE IV"/>
    <property type="match status" value="1"/>
</dbReference>
<dbReference type="Pfam" id="PF01261">
    <property type="entry name" value="AP_endonuc_2"/>
    <property type="match status" value="1"/>
</dbReference>
<dbReference type="SMART" id="SM00518">
    <property type="entry name" value="AP2Ec"/>
    <property type="match status" value="1"/>
</dbReference>
<dbReference type="SUPFAM" id="SSF51658">
    <property type="entry name" value="Xylose isomerase-like"/>
    <property type="match status" value="1"/>
</dbReference>
<dbReference type="PROSITE" id="PS00729">
    <property type="entry name" value="AP_NUCLEASE_F2_1"/>
    <property type="match status" value="1"/>
</dbReference>
<dbReference type="PROSITE" id="PS00730">
    <property type="entry name" value="AP_NUCLEASE_F2_2"/>
    <property type="match status" value="1"/>
</dbReference>
<dbReference type="PROSITE" id="PS00731">
    <property type="entry name" value="AP_NUCLEASE_F2_3"/>
    <property type="match status" value="1"/>
</dbReference>
<dbReference type="PROSITE" id="PS51432">
    <property type="entry name" value="AP_NUCLEASE_F2_4"/>
    <property type="match status" value="1"/>
</dbReference>
<organism>
    <name type="scientific">Actinobacillus pleuropneumoniae serotype 7 (strain AP76)</name>
    <dbReference type="NCBI Taxonomy" id="537457"/>
    <lineage>
        <taxon>Bacteria</taxon>
        <taxon>Pseudomonadati</taxon>
        <taxon>Pseudomonadota</taxon>
        <taxon>Gammaproteobacteria</taxon>
        <taxon>Pasteurellales</taxon>
        <taxon>Pasteurellaceae</taxon>
        <taxon>Actinobacillus</taxon>
    </lineage>
</organism>
<name>END4_ACTP7</name>
<sequence>MKYIGAHVSASGGVENAVLRAVEIGANAFALFTKNQRQWKAPALKADTIEKFKRFCKAHQFSPEHILPHDSYLINLGNPEAENLAKSREAFIDEMERANQLGLKLLNFHPGAHLNKISESECLARIAESINIAVDKVPNVIAVIENTAGQGSNLGYRFEHLAEIIDQVEDKNRVGVCLDTCHLFSAGYDISSLESCEQTFSEFERTVGFQYLRGMHLNGSKTPLGSRVDRHHTLREGTIGTDFCKFIMQDDRFDNIPLILETIQPEIWTEEIKFLRTLAK</sequence>
<feature type="chain" id="PRO_1000096865" description="Probable endonuclease 4">
    <location>
        <begin position="1"/>
        <end position="280"/>
    </location>
</feature>
<feature type="binding site" evidence="1">
    <location>
        <position position="69"/>
    </location>
    <ligand>
        <name>Zn(2+)</name>
        <dbReference type="ChEBI" id="CHEBI:29105"/>
        <label>1</label>
    </ligand>
</feature>
<feature type="binding site" evidence="1">
    <location>
        <position position="109"/>
    </location>
    <ligand>
        <name>Zn(2+)</name>
        <dbReference type="ChEBI" id="CHEBI:29105"/>
        <label>1</label>
    </ligand>
</feature>
<feature type="binding site" evidence="1">
    <location>
        <position position="145"/>
    </location>
    <ligand>
        <name>Zn(2+)</name>
        <dbReference type="ChEBI" id="CHEBI:29105"/>
        <label>1</label>
    </ligand>
</feature>
<feature type="binding site" evidence="1">
    <location>
        <position position="145"/>
    </location>
    <ligand>
        <name>Zn(2+)</name>
        <dbReference type="ChEBI" id="CHEBI:29105"/>
        <label>2</label>
    </ligand>
</feature>
<feature type="binding site" evidence="1">
    <location>
        <position position="179"/>
    </location>
    <ligand>
        <name>Zn(2+)</name>
        <dbReference type="ChEBI" id="CHEBI:29105"/>
        <label>2</label>
    </ligand>
</feature>
<feature type="binding site" evidence="1">
    <location>
        <position position="182"/>
    </location>
    <ligand>
        <name>Zn(2+)</name>
        <dbReference type="ChEBI" id="CHEBI:29105"/>
        <label>3</label>
    </ligand>
</feature>
<feature type="binding site" evidence="1">
    <location>
        <position position="216"/>
    </location>
    <ligand>
        <name>Zn(2+)</name>
        <dbReference type="ChEBI" id="CHEBI:29105"/>
        <label>2</label>
    </ligand>
</feature>
<feature type="binding site" evidence="1">
    <location>
        <position position="229"/>
    </location>
    <ligand>
        <name>Zn(2+)</name>
        <dbReference type="ChEBI" id="CHEBI:29105"/>
        <label>3</label>
    </ligand>
</feature>
<feature type="binding site" evidence="1">
    <location>
        <position position="231"/>
    </location>
    <ligand>
        <name>Zn(2+)</name>
        <dbReference type="ChEBI" id="CHEBI:29105"/>
        <label>3</label>
    </ligand>
</feature>
<feature type="binding site" evidence="1">
    <location>
        <position position="261"/>
    </location>
    <ligand>
        <name>Zn(2+)</name>
        <dbReference type="ChEBI" id="CHEBI:29105"/>
        <label>2</label>
    </ligand>
</feature>